<evidence type="ECO:0000255" key="1">
    <source>
        <dbReference type="HAMAP-Rule" id="MF_01395"/>
    </source>
</evidence>
<evidence type="ECO:0000255" key="2">
    <source>
        <dbReference type="PROSITE-ProRule" id="PRU01136"/>
    </source>
</evidence>
<evidence type="ECO:0000256" key="3">
    <source>
        <dbReference type="SAM" id="MobiDB-lite"/>
    </source>
</evidence>
<gene>
    <name evidence="1" type="primary">accD</name>
    <name type="ordered locus">Smal_2840</name>
</gene>
<reference key="1">
    <citation type="submission" date="2008-06" db="EMBL/GenBank/DDBJ databases">
        <title>Complete sequence of Stenotrophomonas maltophilia R551-3.</title>
        <authorList>
            <consortium name="US DOE Joint Genome Institute"/>
            <person name="Lucas S."/>
            <person name="Copeland A."/>
            <person name="Lapidus A."/>
            <person name="Glavina del Rio T."/>
            <person name="Dalin E."/>
            <person name="Tice H."/>
            <person name="Pitluck S."/>
            <person name="Chain P."/>
            <person name="Malfatti S."/>
            <person name="Shin M."/>
            <person name="Vergez L."/>
            <person name="Lang D."/>
            <person name="Schmutz J."/>
            <person name="Larimer F."/>
            <person name="Land M."/>
            <person name="Hauser L."/>
            <person name="Kyrpides N."/>
            <person name="Mikhailova N."/>
            <person name="Taghavi S."/>
            <person name="Monchy S."/>
            <person name="Newman L."/>
            <person name="Vangronsveld J."/>
            <person name="van der Lelie D."/>
            <person name="Richardson P."/>
        </authorList>
    </citation>
    <scope>NUCLEOTIDE SEQUENCE [LARGE SCALE GENOMIC DNA]</scope>
    <source>
        <strain>R551-3</strain>
    </source>
</reference>
<organism>
    <name type="scientific">Stenotrophomonas maltophilia (strain R551-3)</name>
    <dbReference type="NCBI Taxonomy" id="391008"/>
    <lineage>
        <taxon>Bacteria</taxon>
        <taxon>Pseudomonadati</taxon>
        <taxon>Pseudomonadota</taxon>
        <taxon>Gammaproteobacteria</taxon>
        <taxon>Lysobacterales</taxon>
        <taxon>Lysobacteraceae</taxon>
        <taxon>Stenotrophomonas</taxon>
        <taxon>Stenotrophomonas maltophilia group</taxon>
    </lineage>
</organism>
<comment type="function">
    <text evidence="1">Component of the acetyl coenzyme A carboxylase (ACC) complex. Biotin carboxylase (BC) catalyzes the carboxylation of biotin on its carrier protein (BCCP) and then the CO(2) group is transferred by the transcarboxylase to acetyl-CoA to form malonyl-CoA.</text>
</comment>
<comment type="catalytic activity">
    <reaction evidence="1">
        <text>N(6)-carboxybiotinyl-L-lysyl-[protein] + acetyl-CoA = N(6)-biotinyl-L-lysyl-[protein] + malonyl-CoA</text>
        <dbReference type="Rhea" id="RHEA:54728"/>
        <dbReference type="Rhea" id="RHEA-COMP:10505"/>
        <dbReference type="Rhea" id="RHEA-COMP:10506"/>
        <dbReference type="ChEBI" id="CHEBI:57288"/>
        <dbReference type="ChEBI" id="CHEBI:57384"/>
        <dbReference type="ChEBI" id="CHEBI:83144"/>
        <dbReference type="ChEBI" id="CHEBI:83145"/>
        <dbReference type="EC" id="2.1.3.15"/>
    </reaction>
</comment>
<comment type="cofactor">
    <cofactor evidence="1">
        <name>Zn(2+)</name>
        <dbReference type="ChEBI" id="CHEBI:29105"/>
    </cofactor>
    <text evidence="1">Binds 1 zinc ion per subunit.</text>
</comment>
<comment type="pathway">
    <text evidence="1">Lipid metabolism; malonyl-CoA biosynthesis; malonyl-CoA from acetyl-CoA: step 1/1.</text>
</comment>
<comment type="subunit">
    <text evidence="1">Acetyl-CoA carboxylase is a heterohexamer composed of biotin carboxyl carrier protein (AccB), biotin carboxylase (AccC) and two subunits each of ACCase subunit alpha (AccA) and ACCase subunit beta (AccD).</text>
</comment>
<comment type="subcellular location">
    <subcellularLocation>
        <location evidence="1">Cytoplasm</location>
    </subcellularLocation>
</comment>
<comment type="similarity">
    <text evidence="1">Belongs to the AccD/PCCB family.</text>
</comment>
<proteinExistence type="inferred from homology"/>
<protein>
    <recommendedName>
        <fullName evidence="1">Acetyl-coenzyme A carboxylase carboxyl transferase subunit beta</fullName>
        <shortName evidence="1">ACCase subunit beta</shortName>
        <shortName evidence="1">Acetyl-CoA carboxylase carboxyltransferase subunit beta</shortName>
        <ecNumber evidence="1">2.1.3.15</ecNumber>
    </recommendedName>
</protein>
<keyword id="KW-0067">ATP-binding</keyword>
<keyword id="KW-0963">Cytoplasm</keyword>
<keyword id="KW-0275">Fatty acid biosynthesis</keyword>
<keyword id="KW-0276">Fatty acid metabolism</keyword>
<keyword id="KW-0444">Lipid biosynthesis</keyword>
<keyword id="KW-0443">Lipid metabolism</keyword>
<keyword id="KW-0479">Metal-binding</keyword>
<keyword id="KW-0547">Nucleotide-binding</keyword>
<keyword id="KW-0808">Transferase</keyword>
<keyword id="KW-0862">Zinc</keyword>
<keyword id="KW-0863">Zinc-finger</keyword>
<feature type="chain" id="PRO_0000359071" description="Acetyl-coenzyme A carboxylase carboxyl transferase subunit beta">
    <location>
        <begin position="1"/>
        <end position="291"/>
    </location>
</feature>
<feature type="domain" description="CoA carboxyltransferase N-terminal" evidence="2">
    <location>
        <begin position="28"/>
        <end position="291"/>
    </location>
</feature>
<feature type="zinc finger region" description="C4-type" evidence="1">
    <location>
        <begin position="32"/>
        <end position="54"/>
    </location>
</feature>
<feature type="region of interest" description="Disordered" evidence="3">
    <location>
        <begin position="1"/>
        <end position="23"/>
    </location>
</feature>
<feature type="binding site" evidence="1">
    <location>
        <position position="32"/>
    </location>
    <ligand>
        <name>Zn(2+)</name>
        <dbReference type="ChEBI" id="CHEBI:29105"/>
    </ligand>
</feature>
<feature type="binding site" evidence="1">
    <location>
        <position position="35"/>
    </location>
    <ligand>
        <name>Zn(2+)</name>
        <dbReference type="ChEBI" id="CHEBI:29105"/>
    </ligand>
</feature>
<feature type="binding site" evidence="1">
    <location>
        <position position="51"/>
    </location>
    <ligand>
        <name>Zn(2+)</name>
        <dbReference type="ChEBI" id="CHEBI:29105"/>
    </ligand>
</feature>
<feature type="binding site" evidence="1">
    <location>
        <position position="54"/>
    </location>
    <ligand>
        <name>Zn(2+)</name>
        <dbReference type="ChEBI" id="CHEBI:29105"/>
    </ligand>
</feature>
<dbReference type="EC" id="2.1.3.15" evidence="1"/>
<dbReference type="EMBL" id="CP001111">
    <property type="protein sequence ID" value="ACF52540.1"/>
    <property type="molecule type" value="Genomic_DNA"/>
</dbReference>
<dbReference type="RefSeq" id="WP_006381208.1">
    <property type="nucleotide sequence ID" value="NC_011071.1"/>
</dbReference>
<dbReference type="SMR" id="B4SQU5"/>
<dbReference type="STRING" id="391008.Smal_2840"/>
<dbReference type="KEGG" id="smt:Smal_2840"/>
<dbReference type="eggNOG" id="COG0777">
    <property type="taxonomic scope" value="Bacteria"/>
</dbReference>
<dbReference type="HOGENOM" id="CLU_015486_1_0_6"/>
<dbReference type="OrthoDB" id="9772975at2"/>
<dbReference type="UniPathway" id="UPA00655">
    <property type="reaction ID" value="UER00711"/>
</dbReference>
<dbReference type="Proteomes" id="UP000001867">
    <property type="component" value="Chromosome"/>
</dbReference>
<dbReference type="GO" id="GO:0009329">
    <property type="term" value="C:acetate CoA-transferase complex"/>
    <property type="evidence" value="ECO:0007669"/>
    <property type="project" value="TreeGrafter"/>
</dbReference>
<dbReference type="GO" id="GO:0003989">
    <property type="term" value="F:acetyl-CoA carboxylase activity"/>
    <property type="evidence" value="ECO:0007669"/>
    <property type="project" value="InterPro"/>
</dbReference>
<dbReference type="GO" id="GO:0005524">
    <property type="term" value="F:ATP binding"/>
    <property type="evidence" value="ECO:0007669"/>
    <property type="project" value="UniProtKB-KW"/>
</dbReference>
<dbReference type="GO" id="GO:0016743">
    <property type="term" value="F:carboxyl- or carbamoyltransferase activity"/>
    <property type="evidence" value="ECO:0007669"/>
    <property type="project" value="UniProtKB-UniRule"/>
</dbReference>
<dbReference type="GO" id="GO:0008270">
    <property type="term" value="F:zinc ion binding"/>
    <property type="evidence" value="ECO:0007669"/>
    <property type="project" value="UniProtKB-UniRule"/>
</dbReference>
<dbReference type="GO" id="GO:0006633">
    <property type="term" value="P:fatty acid biosynthetic process"/>
    <property type="evidence" value="ECO:0007669"/>
    <property type="project" value="UniProtKB-KW"/>
</dbReference>
<dbReference type="GO" id="GO:2001295">
    <property type="term" value="P:malonyl-CoA biosynthetic process"/>
    <property type="evidence" value="ECO:0007669"/>
    <property type="project" value="UniProtKB-UniRule"/>
</dbReference>
<dbReference type="Gene3D" id="3.90.226.10">
    <property type="entry name" value="2-enoyl-CoA Hydratase, Chain A, domain 1"/>
    <property type="match status" value="1"/>
</dbReference>
<dbReference type="HAMAP" id="MF_01395">
    <property type="entry name" value="AcetylCoA_CT_beta"/>
    <property type="match status" value="1"/>
</dbReference>
<dbReference type="InterPro" id="IPR034733">
    <property type="entry name" value="AcCoA_carboxyl_beta"/>
</dbReference>
<dbReference type="InterPro" id="IPR000438">
    <property type="entry name" value="Acetyl_CoA_COase_Trfase_b_su"/>
</dbReference>
<dbReference type="InterPro" id="IPR029045">
    <property type="entry name" value="ClpP/crotonase-like_dom_sf"/>
</dbReference>
<dbReference type="InterPro" id="IPR011762">
    <property type="entry name" value="COA_CT_N"/>
</dbReference>
<dbReference type="InterPro" id="IPR041010">
    <property type="entry name" value="Znf-ACC"/>
</dbReference>
<dbReference type="NCBIfam" id="TIGR00515">
    <property type="entry name" value="accD"/>
    <property type="match status" value="1"/>
</dbReference>
<dbReference type="PANTHER" id="PTHR42995">
    <property type="entry name" value="ACETYL-COENZYME A CARBOXYLASE CARBOXYL TRANSFERASE SUBUNIT BETA, CHLOROPLASTIC"/>
    <property type="match status" value="1"/>
</dbReference>
<dbReference type="PANTHER" id="PTHR42995:SF5">
    <property type="entry name" value="ACETYL-COENZYME A CARBOXYLASE CARBOXYL TRANSFERASE SUBUNIT BETA, CHLOROPLASTIC"/>
    <property type="match status" value="1"/>
</dbReference>
<dbReference type="Pfam" id="PF01039">
    <property type="entry name" value="Carboxyl_trans"/>
    <property type="match status" value="1"/>
</dbReference>
<dbReference type="Pfam" id="PF17848">
    <property type="entry name" value="Zn_ribbon_ACC"/>
    <property type="match status" value="1"/>
</dbReference>
<dbReference type="PRINTS" id="PR01070">
    <property type="entry name" value="ACCCTRFRASEB"/>
</dbReference>
<dbReference type="SUPFAM" id="SSF52096">
    <property type="entry name" value="ClpP/crotonase"/>
    <property type="match status" value="1"/>
</dbReference>
<dbReference type="PROSITE" id="PS50980">
    <property type="entry name" value="COA_CT_NTER"/>
    <property type="match status" value="1"/>
</dbReference>
<accession>B4SQU5</accession>
<name>ACCD_STRM5</name>
<sequence>MSWLSKLMPSGIRTDNTPSKKRSVPEGLWEKCSNCGSALYRPELEENLEVCPKCGHHMAIRARARLAALFDADSTTEIAARLGPTDLLKFKDQKKYSERIKIAQKNTGEYDALIAMRGLLKGRALVASSFDFAFMGGSMGSVVGERFSLAAETAVEIGAPYVCFSQSGGARMQEGLFSLMQMAKTSAALGKLREAGLPFISVLTHPTTGGVSASFAMLGDINIAEPQALIGFAGPRVIEQTVREKLPEGFQRSEFLLEHGAIDQICDRREMRDRLADLLAMLGRQPAPEVA</sequence>